<evidence type="ECO:0000250" key="1"/>
<evidence type="ECO:0000255" key="2"/>
<evidence type="ECO:0000305" key="3"/>
<gene>
    <name type="primary">minJ</name>
    <name type="synonym">yvjD</name>
    <name type="ordered locus">LC2W_1033</name>
</gene>
<feature type="chain" id="PRO_0000413093" description="Probable cell division topological determinant MinJ">
    <location>
        <begin position="1"/>
        <end position="367"/>
    </location>
</feature>
<feature type="transmembrane region" description="Helical" evidence="2">
    <location>
        <begin position="2"/>
        <end position="22"/>
    </location>
</feature>
<feature type="transmembrane region" description="Helical" evidence="2">
    <location>
        <begin position="49"/>
        <end position="69"/>
    </location>
</feature>
<feature type="transmembrane region" description="Helical" evidence="2">
    <location>
        <begin position="72"/>
        <end position="92"/>
    </location>
</feature>
<feature type="transmembrane region" description="Helical" evidence="2">
    <location>
        <begin position="97"/>
        <end position="117"/>
    </location>
</feature>
<feature type="transmembrane region" description="Helical" evidence="2">
    <location>
        <begin position="119"/>
        <end position="139"/>
    </location>
</feature>
<feature type="transmembrane region" description="Helical" evidence="2">
    <location>
        <begin position="186"/>
        <end position="206"/>
    </location>
</feature>
<feature type="transmembrane region" description="Helical" evidence="2">
    <location>
        <begin position="226"/>
        <end position="246"/>
    </location>
</feature>
<feature type="transmembrane region" description="Helical" evidence="2">
    <location>
        <begin position="248"/>
        <end position="268"/>
    </location>
</feature>
<feature type="domain" description="PDZ">
    <location>
        <begin position="261"/>
        <end position="339"/>
    </location>
</feature>
<accession>F2M971</accession>
<reference key="1">
    <citation type="journal article" date="2011" name="J. Bacteriol.">
        <title>Complete genome sequence of the probiotic bacterium Lactobacillus casei LC2W.</title>
        <authorList>
            <person name="Chen C."/>
            <person name="Ai L."/>
            <person name="Zhou F."/>
            <person name="Wang L."/>
            <person name="Zhang H."/>
            <person name="Chen W."/>
            <person name="Guo B."/>
        </authorList>
    </citation>
    <scope>NUCLEOTIDE SEQUENCE [LARGE SCALE GENOMIC DNA]</scope>
    <source>
        <strain>LC2W</strain>
    </source>
</reference>
<proteinExistence type="inferred from homology"/>
<comment type="function">
    <text evidence="1">The main function of the Min system is to promote the disassembly of the cytokinetic ring after cell division, thereby ensuring that division occurs only once per cell cycle. MinJ acts as a bridge between DivIVA and MinD. May modulate activity and localization of MinD and MinC through direct interaction with MinD (By similarity).</text>
</comment>
<comment type="subcellular location">
    <subcellularLocation>
        <location evidence="1">Cell membrane</location>
        <topology evidence="1">Multi-pass membrane protein</topology>
    </subcellularLocation>
</comment>
<comment type="similarity">
    <text evidence="3">Belongs to the MinJ family.</text>
</comment>
<keyword id="KW-0131">Cell cycle</keyword>
<keyword id="KW-0132">Cell division</keyword>
<keyword id="KW-1003">Cell membrane</keyword>
<keyword id="KW-0472">Membrane</keyword>
<keyword id="KW-0717">Septation</keyword>
<keyword id="KW-0812">Transmembrane</keyword>
<keyword id="KW-1133">Transmembrane helix</keyword>
<organism>
    <name type="scientific">Lacticaseibacillus paracasei</name>
    <name type="common">Lactobacillus paracasei</name>
    <dbReference type="NCBI Taxonomy" id="1597"/>
    <lineage>
        <taxon>Bacteria</taxon>
        <taxon>Bacillati</taxon>
        <taxon>Bacillota</taxon>
        <taxon>Bacilli</taxon>
        <taxon>Lactobacillales</taxon>
        <taxon>Lactobacillaceae</taxon>
        <taxon>Lacticaseibacillus</taxon>
    </lineage>
</organism>
<protein>
    <recommendedName>
        <fullName>Probable cell division topological determinant MinJ</fullName>
    </recommendedName>
</protein>
<dbReference type="EMBL" id="CP002616">
    <property type="protein sequence ID" value="AEA53367.1"/>
    <property type="molecule type" value="Genomic_DNA"/>
</dbReference>
<dbReference type="RefSeq" id="WP_003564197.1">
    <property type="nucleotide sequence ID" value="NZ_WKPH01000018.1"/>
</dbReference>
<dbReference type="SMR" id="F2M971"/>
<dbReference type="KEGG" id="lce:LC2W_1033"/>
<dbReference type="PATRIC" id="fig|999378.3.peg.1011"/>
<dbReference type="HOGENOM" id="CLU_051142_1_0_9"/>
<dbReference type="GO" id="GO:0005886">
    <property type="term" value="C:plasma membrane"/>
    <property type="evidence" value="ECO:0007669"/>
    <property type="project" value="UniProtKB-SubCell"/>
</dbReference>
<dbReference type="GO" id="GO:0000917">
    <property type="term" value="P:division septum assembly"/>
    <property type="evidence" value="ECO:0007669"/>
    <property type="project" value="UniProtKB-KW"/>
</dbReference>
<dbReference type="Gene3D" id="2.30.42.10">
    <property type="match status" value="1"/>
</dbReference>
<dbReference type="InterPro" id="IPR001478">
    <property type="entry name" value="PDZ"/>
</dbReference>
<dbReference type="InterPro" id="IPR041489">
    <property type="entry name" value="PDZ_6"/>
</dbReference>
<dbReference type="InterPro" id="IPR036034">
    <property type="entry name" value="PDZ_sf"/>
</dbReference>
<dbReference type="Pfam" id="PF17820">
    <property type="entry name" value="PDZ_6"/>
    <property type="match status" value="1"/>
</dbReference>
<dbReference type="SMART" id="SM00228">
    <property type="entry name" value="PDZ"/>
    <property type="match status" value="1"/>
</dbReference>
<dbReference type="SUPFAM" id="SSF50156">
    <property type="entry name" value="PDZ domain-like"/>
    <property type="match status" value="1"/>
</dbReference>
<name>MINJ_LACPA</name>
<sequence>MAVVVALLINPVGLVFWLALGLTIWFAVNRTDRERRRYLRAIHPKHPEIGRFFWIGLVVGALVSLVMVIGRLQISLAALLALSGLTLVALLFSKWRFSPWWLGLASLAAVGQSGLLAEQHAANLAILVGLLWLTQAGLARFNRGDEIESPVIQQDRRQRQSAAFELRQLFWVPLILPVAVENVSNLPLLAVTVQSLTFVGLPLLLGATFMTPRDRAQTAWRRSWPWYGGAGGVLIVYGIVARTMTLPLLVSLVFPAVVSLVLVGGFIWQGRQVHLTVTLADQGVVLIGVVPHTPAAEMGLQPGDRVLACNHHSVNNSRELYDAIQKEPTYCRLRLRQADGELRLAETAIFAGAPHELGMILFPEETA</sequence>